<sequence length="597" mass="67592">MPDIKITPLGAGQDVGRSCLLLSMGGKNIMLDCGMHMGYNDERRFPDFSYIVPEGPITSHIDCVIISHFHLDHCGALPYMSEIVGYTGPIYMTHPTKAIAPILLEDMRKVAVERKGESNFFTTQMIKDCMKKVIPVTLHQSMMVDTDLEIKAYYAGHVLGAAMFWIKVGSQSVVYTGDYNMTPDRHLGAAWIDKCRPDLLISESTYATTIRDSKRCRERDFLKKVHECVAKGGKVLIPVFALGRAQELCILLETYWERMNLKYPIYFALGLTEKANTYYKMFITWTNQKIRKTFVHRNMFDFKHIKPFDKAYIDNPGAMVVFATPGMLHAGLSLQIFKKWAPNENNMVIMPGYCVQGTVGNKILGGAKKVEFENRQVVEVKMAVEYMSFSAHADAKGIMQLIQNCEPKNVMLVHGEAGKMKFLRSKIKDEFNLETYMPANGETCVISTPVKIPVDASVSLLKAEARSYNAQPPDPKRRRLIHGVLVMKDNRIMLQNLTDALKEIGINRHVMRFTSKVKMDDSGPVIRTSERLKTLLEEKLAGWTVTMQENGSIAIESVEVKVEEDEKDPKQKNILISWTNQDEDIGAYILNVLQNMC</sequence>
<dbReference type="EC" id="3.1.27.-" evidence="3 4"/>
<dbReference type="EMBL" id="AE014297">
    <property type="protein sequence ID" value="AAF56931.1"/>
    <property type="molecule type" value="Genomic_DNA"/>
</dbReference>
<dbReference type="EMBL" id="AY061097">
    <property type="protein sequence ID" value="AAL28645.1"/>
    <property type="molecule type" value="mRNA"/>
</dbReference>
<dbReference type="RefSeq" id="NP_651721.1">
    <property type="nucleotide sequence ID" value="NM_143464.4"/>
</dbReference>
<dbReference type="PDB" id="7SN8">
    <property type="method" value="EM"/>
    <property type="resolution" value="2.74 A"/>
    <property type="chains" value="K=1-597"/>
</dbReference>
<dbReference type="PDB" id="8UIC">
    <property type="method" value="EM"/>
    <property type="resolution" value="3.54 A"/>
    <property type="chains" value="K=1-597"/>
</dbReference>
<dbReference type="PDBsum" id="7SN8"/>
<dbReference type="PDBsum" id="8UIC"/>
<dbReference type="EMDB" id="EMD-25214"/>
<dbReference type="EMDB" id="EMD-42292"/>
<dbReference type="SMR" id="Q9VAH9"/>
<dbReference type="FunCoup" id="Q9VAH9">
    <property type="interactions" value="1679"/>
</dbReference>
<dbReference type="IntAct" id="Q9VAH9">
    <property type="interactions" value="5"/>
</dbReference>
<dbReference type="STRING" id="7227.FBpp0084842"/>
<dbReference type="PaxDb" id="7227-FBpp0084842"/>
<dbReference type="DNASU" id="43506"/>
<dbReference type="EnsemblMetazoa" id="FBtr0085476">
    <property type="protein sequence ID" value="FBpp0084842"/>
    <property type="gene ID" value="FBgn0039691"/>
</dbReference>
<dbReference type="GeneID" id="43506"/>
<dbReference type="KEGG" id="dme:Dmel_CG1972"/>
<dbReference type="UCSC" id="CG1972-RA">
    <property type="organism name" value="d. melanogaster"/>
</dbReference>
<dbReference type="AGR" id="FB:FBgn0039691"/>
<dbReference type="CTD" id="54973"/>
<dbReference type="FlyBase" id="FBgn0039691">
    <property type="gene designation" value="IntS11"/>
</dbReference>
<dbReference type="VEuPathDB" id="VectorBase:FBgn0039691"/>
<dbReference type="eggNOG" id="KOG1136">
    <property type="taxonomic scope" value="Eukaryota"/>
</dbReference>
<dbReference type="GeneTree" id="ENSGT00940000157644"/>
<dbReference type="HOGENOM" id="CLU_009673_3_2_1"/>
<dbReference type="InParanoid" id="Q9VAH9"/>
<dbReference type="OMA" id="YLDGMIW"/>
<dbReference type="OrthoDB" id="10249535at2759"/>
<dbReference type="PhylomeDB" id="Q9VAH9"/>
<dbReference type="Reactome" id="R-DME-6807505">
    <property type="pathway name" value="RNA polymerase II transcribes snRNA genes"/>
</dbReference>
<dbReference type="BioGRID-ORCS" id="43506">
    <property type="hits" value="1 hit in 1 CRISPR screen"/>
</dbReference>
<dbReference type="GenomeRNAi" id="43506"/>
<dbReference type="PRO" id="PR:Q9VAH9"/>
<dbReference type="Proteomes" id="UP000000803">
    <property type="component" value="Chromosome 3R"/>
</dbReference>
<dbReference type="Bgee" id="FBgn0039691">
    <property type="expression patterns" value="Expressed in egg cell and 45 other cell types or tissues"/>
</dbReference>
<dbReference type="GO" id="GO:0005737">
    <property type="term" value="C:cytoplasm"/>
    <property type="evidence" value="ECO:0000250"/>
    <property type="project" value="UniProtKB"/>
</dbReference>
<dbReference type="GO" id="GO:0005829">
    <property type="term" value="C:cytosol"/>
    <property type="evidence" value="ECO:0000314"/>
    <property type="project" value="FlyBase"/>
</dbReference>
<dbReference type="GO" id="GO:0160232">
    <property type="term" value="C:INTAC complex"/>
    <property type="evidence" value="ECO:0000314"/>
    <property type="project" value="UniProtKB"/>
</dbReference>
<dbReference type="GO" id="GO:0032039">
    <property type="term" value="C:integrator complex"/>
    <property type="evidence" value="ECO:0000314"/>
    <property type="project" value="UniProtKB"/>
</dbReference>
<dbReference type="GO" id="GO:0005634">
    <property type="term" value="C:nucleus"/>
    <property type="evidence" value="ECO:0000314"/>
    <property type="project" value="FlyBase"/>
</dbReference>
<dbReference type="GO" id="GO:0000822">
    <property type="term" value="F:inositol hexakisphosphate binding"/>
    <property type="evidence" value="ECO:0000314"/>
    <property type="project" value="UniProtKB"/>
</dbReference>
<dbReference type="GO" id="GO:0004521">
    <property type="term" value="F:RNA endonuclease activity"/>
    <property type="evidence" value="ECO:0000314"/>
    <property type="project" value="UniProtKB"/>
</dbReference>
<dbReference type="GO" id="GO:0160240">
    <property type="term" value="P:RNA polymerase II transcription initiation surveillance"/>
    <property type="evidence" value="ECO:0000314"/>
    <property type="project" value="UniProtKB"/>
</dbReference>
<dbReference type="GO" id="GO:0034472">
    <property type="term" value="P:snRNA 3'-end processing"/>
    <property type="evidence" value="ECO:0000314"/>
    <property type="project" value="FlyBase"/>
</dbReference>
<dbReference type="GO" id="GO:0016180">
    <property type="term" value="P:snRNA processing"/>
    <property type="evidence" value="ECO:0000250"/>
    <property type="project" value="FlyBase"/>
</dbReference>
<dbReference type="CDD" id="cd16291">
    <property type="entry name" value="INTS11-like_MBL-fold"/>
    <property type="match status" value="1"/>
</dbReference>
<dbReference type="FunFam" id="3.40.50.10890:FF:000002">
    <property type="entry name" value="Integrator complex subunit 11"/>
    <property type="match status" value="1"/>
</dbReference>
<dbReference type="FunFam" id="3.60.15.10:FF:000028">
    <property type="entry name" value="Integrator complex subunit 11 isoform X3"/>
    <property type="match status" value="1"/>
</dbReference>
<dbReference type="Gene3D" id="3.40.50.10890">
    <property type="match status" value="1"/>
</dbReference>
<dbReference type="Gene3D" id="3.60.15.10">
    <property type="entry name" value="Ribonuclease Z/Hydroxyacylglutathione hydrolase-like"/>
    <property type="match status" value="1"/>
</dbReference>
<dbReference type="InterPro" id="IPR022712">
    <property type="entry name" value="Beta_Casp"/>
</dbReference>
<dbReference type="InterPro" id="IPR041897">
    <property type="entry name" value="INTS11-like_MBL-fold"/>
</dbReference>
<dbReference type="InterPro" id="IPR048662">
    <property type="entry name" value="IntS11_C"/>
</dbReference>
<dbReference type="InterPro" id="IPR050698">
    <property type="entry name" value="MBL"/>
</dbReference>
<dbReference type="InterPro" id="IPR001279">
    <property type="entry name" value="Metallo-B-lactamas"/>
</dbReference>
<dbReference type="InterPro" id="IPR036866">
    <property type="entry name" value="RibonucZ/Hydroxyglut_hydro"/>
</dbReference>
<dbReference type="InterPro" id="IPR011108">
    <property type="entry name" value="RMMBL"/>
</dbReference>
<dbReference type="PANTHER" id="PTHR11203">
    <property type="entry name" value="CLEAVAGE AND POLYADENYLATION SPECIFICITY FACTOR FAMILY MEMBER"/>
    <property type="match status" value="1"/>
</dbReference>
<dbReference type="PANTHER" id="PTHR11203:SF37">
    <property type="entry name" value="INTEGRATOR COMPLEX SUBUNIT 11"/>
    <property type="match status" value="1"/>
</dbReference>
<dbReference type="Pfam" id="PF10996">
    <property type="entry name" value="Beta-Casp"/>
    <property type="match status" value="1"/>
</dbReference>
<dbReference type="Pfam" id="PF21386">
    <property type="entry name" value="IntS11_C"/>
    <property type="match status" value="1"/>
</dbReference>
<dbReference type="Pfam" id="PF16661">
    <property type="entry name" value="Lactamase_B_6"/>
    <property type="match status" value="1"/>
</dbReference>
<dbReference type="Pfam" id="PF07521">
    <property type="entry name" value="RMMBL"/>
    <property type="match status" value="1"/>
</dbReference>
<dbReference type="SMART" id="SM01027">
    <property type="entry name" value="Beta-Casp"/>
    <property type="match status" value="1"/>
</dbReference>
<dbReference type="SMART" id="SM00849">
    <property type="entry name" value="Lactamase_B"/>
    <property type="match status" value="1"/>
</dbReference>
<dbReference type="SUPFAM" id="SSF56281">
    <property type="entry name" value="Metallo-hydrolase/oxidoreductase"/>
    <property type="match status" value="1"/>
</dbReference>
<comment type="function">
    <text evidence="1 2 3 4 5">RNA endonuclease component of the integrator complex, a multiprotein complex that terminates RNA polymerase II (Pol II) transcription in the promoter-proximal region of genes (PubMed:21078872, PubMed:23097424, PubMed:31530651, PubMed:31809743, PubMed:32966759). The integrator complex provides a quality checkpoint during transcription elongation by driving premature transcription termination of transcripts that are unfavorably configured for transcriptional elongation: the complex terminates transcription by (1) catalyzing dephosphorylation of the C-terminal domain (CTD) of Pol II subunit Polr2A/Rbp1 and Spt5, and (2) degrading the exiting nascent RNA transcript via endonuclease activity (PubMed:31530651, PubMed:32966759). The integrator complex is also involved in the 3'-end processing of the U7 snRNA, and also the spliceosomal snRNAs U1, U2, U4 and U5 (PubMed:21078872, PubMed:23097424). Within the integrator complex, IntS11 constitutes the RNA endonuclease subunit that degrades exiting nascent RNA transcripts (PubMed:31530651, PubMed:31809743).</text>
</comment>
<comment type="cofactor">
    <cofactor evidence="6">
        <name>Zn(2+)</name>
        <dbReference type="ChEBI" id="CHEBI:29105"/>
    </cofactor>
</comment>
<comment type="activity regulation">
    <text evidence="9">The RNA endonuclease activity is inhibited by Brat1 that forms hyrogen bond and hydrophobic interactions with the active site.</text>
</comment>
<comment type="subunit">
    <text evidence="2 3 4 5 6 8 9">Belongs to the multiprotein complex Integrator, at least composed of IntS1, IntS2, IntS3, IntS4, omd/IntS5, IntS6, defl/IntS7, IntS8, IntS9, IntS10, IntS11, IntS12, asun/IntS13, IntS14 and IntS15 (PubMed:23097424, PubMed:31530651, PubMed:31809743, PubMed:32966759, PubMed:37995689, PubMed:39032490). The core complex associates with protein phosphatase 2A subunits mts/PP2A and Pp2A-29B, to form the Integrator-PP2A (INTAC) complex (PubMed:32966759, PubMed:37995689). IntS11 is part of the RNA endonuclease subcomplex, composed of IntS4, IntS9, IntS11 and inositol hexakisphosphate (InsP6) (PubMed:36180473). Interacts with Brat1; interaction is required for the assembly of the RNA endonuclease subcomplex and inhibits the endonuclease activity of IntS11 before formation of mature integrator complex (PubMed:39032490).</text>
</comment>
<comment type="interaction">
    <interactant intactId="EBI-3425361">
        <id>Q9VAH9</id>
    </interactant>
    <interactant intactId="EBI-91372">
        <id>Q95TS5</id>
        <label>IntS9</label>
    </interactant>
    <organismsDiffer>false</organismsDiffer>
    <experiments>8</experiments>
</comment>
<comment type="subcellular location">
    <subcellularLocation>
        <location evidence="9">Nucleus</location>
    </subcellularLocation>
    <subcellularLocation>
        <location evidence="9">Cytoplasm</location>
        <location evidence="9">Cytosol</location>
    </subcellularLocation>
</comment>
<comment type="tissue specificity">
    <text evidence="7">Expressed in neurons and glia of the larval and adult brain.</text>
</comment>
<comment type="disruption phenotype">
    <text evidence="7">IntS11 knockout flies live for 5 or 6 days, show developmental delay and die as L2 larvae. IntS11 knockdown reduces viability of adult flies and results in locomotor defects.</text>
</comment>
<comment type="similarity">
    <text evidence="12">Belongs to the metallo-beta-lactamase superfamily. RNA-metabolizing metallo-beta-lactamase-like family. INTS11 subfamily.</text>
</comment>
<gene>
    <name evidence="11 16" type="primary">IntS11</name>
    <name evidence="16" type="ORF">CG1972</name>
</gene>
<evidence type="ECO:0000269" key="1">
    <source>
    </source>
</evidence>
<evidence type="ECO:0000269" key="2">
    <source>
    </source>
</evidence>
<evidence type="ECO:0000269" key="3">
    <source>
    </source>
</evidence>
<evidence type="ECO:0000269" key="4">
    <source>
    </source>
</evidence>
<evidence type="ECO:0000269" key="5">
    <source>
    </source>
</evidence>
<evidence type="ECO:0000269" key="6">
    <source>
    </source>
</evidence>
<evidence type="ECO:0000269" key="7">
    <source>
    </source>
</evidence>
<evidence type="ECO:0000269" key="8">
    <source>
    </source>
</evidence>
<evidence type="ECO:0000269" key="9">
    <source>
    </source>
</evidence>
<evidence type="ECO:0000303" key="10">
    <source>
    </source>
</evidence>
<evidence type="ECO:0000303" key="11">
    <source>
    </source>
</evidence>
<evidence type="ECO:0000305" key="12"/>
<evidence type="ECO:0000305" key="13">
    <source>
    </source>
</evidence>
<evidence type="ECO:0000305" key="14">
    <source>
    </source>
</evidence>
<evidence type="ECO:0000312" key="15">
    <source>
        <dbReference type="EMBL" id="AAL28645.1"/>
    </source>
</evidence>
<evidence type="ECO:0000312" key="16">
    <source>
        <dbReference type="FlyBase" id="FBgn0039691"/>
    </source>
</evidence>
<evidence type="ECO:0000312" key="17">
    <source>
        <dbReference type="Proteomes" id="UP000000803"/>
    </source>
</evidence>
<evidence type="ECO:0007744" key="18">
    <source>
        <dbReference type="PDB" id="7SN8"/>
    </source>
</evidence>
<evidence type="ECO:0007744" key="19">
    <source>
        <dbReference type="PDB" id="8UIC"/>
    </source>
</evidence>
<evidence type="ECO:0007829" key="20">
    <source>
        <dbReference type="PDB" id="7SN8"/>
    </source>
</evidence>
<keyword id="KW-0002">3D-structure</keyword>
<keyword id="KW-0963">Cytoplasm</keyword>
<keyword id="KW-0378">Hydrolase</keyword>
<keyword id="KW-0479">Metal-binding</keyword>
<keyword id="KW-0539">Nucleus</keyword>
<keyword id="KW-1185">Reference proteome</keyword>
<keyword id="KW-0862">Zinc</keyword>
<organism evidence="17">
    <name type="scientific">Drosophila melanogaster</name>
    <name type="common">Fruit fly</name>
    <dbReference type="NCBI Taxonomy" id="7227"/>
    <lineage>
        <taxon>Eukaryota</taxon>
        <taxon>Metazoa</taxon>
        <taxon>Ecdysozoa</taxon>
        <taxon>Arthropoda</taxon>
        <taxon>Hexapoda</taxon>
        <taxon>Insecta</taxon>
        <taxon>Pterygota</taxon>
        <taxon>Neoptera</taxon>
        <taxon>Endopterygota</taxon>
        <taxon>Diptera</taxon>
        <taxon>Brachycera</taxon>
        <taxon>Muscomorpha</taxon>
        <taxon>Ephydroidea</taxon>
        <taxon>Drosophilidae</taxon>
        <taxon>Drosophila</taxon>
        <taxon>Sophophora</taxon>
    </lineage>
</organism>
<name>INT11_DROME</name>
<accession>Q9VAH9</accession>
<reference evidence="17" key="1">
    <citation type="journal article" date="2000" name="Science">
        <title>The genome sequence of Drosophila melanogaster.</title>
        <authorList>
            <person name="Adams M.D."/>
            <person name="Celniker S.E."/>
            <person name="Holt R.A."/>
            <person name="Evans C.A."/>
            <person name="Gocayne J.D."/>
            <person name="Amanatides P.G."/>
            <person name="Scherer S.E."/>
            <person name="Li P.W."/>
            <person name="Hoskins R.A."/>
            <person name="Galle R.F."/>
            <person name="George R.A."/>
            <person name="Lewis S.E."/>
            <person name="Richards S."/>
            <person name="Ashburner M."/>
            <person name="Henderson S.N."/>
            <person name="Sutton G.G."/>
            <person name="Wortman J.R."/>
            <person name="Yandell M.D."/>
            <person name="Zhang Q."/>
            <person name="Chen L.X."/>
            <person name="Brandon R.C."/>
            <person name="Rogers Y.-H.C."/>
            <person name="Blazej R.G."/>
            <person name="Champe M."/>
            <person name="Pfeiffer B.D."/>
            <person name="Wan K.H."/>
            <person name="Doyle C."/>
            <person name="Baxter E.G."/>
            <person name="Helt G."/>
            <person name="Nelson C.R."/>
            <person name="Miklos G.L.G."/>
            <person name="Abril J.F."/>
            <person name="Agbayani A."/>
            <person name="An H.-J."/>
            <person name="Andrews-Pfannkoch C."/>
            <person name="Baldwin D."/>
            <person name="Ballew R.M."/>
            <person name="Basu A."/>
            <person name="Baxendale J."/>
            <person name="Bayraktaroglu L."/>
            <person name="Beasley E.M."/>
            <person name="Beeson K.Y."/>
            <person name="Benos P.V."/>
            <person name="Berman B.P."/>
            <person name="Bhandari D."/>
            <person name="Bolshakov S."/>
            <person name="Borkova D."/>
            <person name="Botchan M.R."/>
            <person name="Bouck J."/>
            <person name="Brokstein P."/>
            <person name="Brottier P."/>
            <person name="Burtis K.C."/>
            <person name="Busam D.A."/>
            <person name="Butler H."/>
            <person name="Cadieu E."/>
            <person name="Center A."/>
            <person name="Chandra I."/>
            <person name="Cherry J.M."/>
            <person name="Cawley S."/>
            <person name="Dahlke C."/>
            <person name="Davenport L.B."/>
            <person name="Davies P."/>
            <person name="de Pablos B."/>
            <person name="Delcher A."/>
            <person name="Deng Z."/>
            <person name="Mays A.D."/>
            <person name="Dew I."/>
            <person name="Dietz S.M."/>
            <person name="Dodson K."/>
            <person name="Doup L.E."/>
            <person name="Downes M."/>
            <person name="Dugan-Rocha S."/>
            <person name="Dunkov B.C."/>
            <person name="Dunn P."/>
            <person name="Durbin K.J."/>
            <person name="Evangelista C.C."/>
            <person name="Ferraz C."/>
            <person name="Ferriera S."/>
            <person name="Fleischmann W."/>
            <person name="Fosler C."/>
            <person name="Gabrielian A.E."/>
            <person name="Garg N.S."/>
            <person name="Gelbart W.M."/>
            <person name="Glasser K."/>
            <person name="Glodek A."/>
            <person name="Gong F."/>
            <person name="Gorrell J.H."/>
            <person name="Gu Z."/>
            <person name="Guan P."/>
            <person name="Harris M."/>
            <person name="Harris N.L."/>
            <person name="Harvey D.A."/>
            <person name="Heiman T.J."/>
            <person name="Hernandez J.R."/>
            <person name="Houck J."/>
            <person name="Hostin D."/>
            <person name="Houston K.A."/>
            <person name="Howland T.J."/>
            <person name="Wei M.-H."/>
            <person name="Ibegwam C."/>
            <person name="Jalali M."/>
            <person name="Kalush F."/>
            <person name="Karpen G.H."/>
            <person name="Ke Z."/>
            <person name="Kennison J.A."/>
            <person name="Ketchum K.A."/>
            <person name="Kimmel B.E."/>
            <person name="Kodira C.D."/>
            <person name="Kraft C.L."/>
            <person name="Kravitz S."/>
            <person name="Kulp D."/>
            <person name="Lai Z."/>
            <person name="Lasko P."/>
            <person name="Lei Y."/>
            <person name="Levitsky A.A."/>
            <person name="Li J.H."/>
            <person name="Li Z."/>
            <person name="Liang Y."/>
            <person name="Lin X."/>
            <person name="Liu X."/>
            <person name="Mattei B."/>
            <person name="McIntosh T.C."/>
            <person name="McLeod M.P."/>
            <person name="McPherson D."/>
            <person name="Merkulov G."/>
            <person name="Milshina N.V."/>
            <person name="Mobarry C."/>
            <person name="Morris J."/>
            <person name="Moshrefi A."/>
            <person name="Mount S.M."/>
            <person name="Moy M."/>
            <person name="Murphy B."/>
            <person name="Murphy L."/>
            <person name="Muzny D.M."/>
            <person name="Nelson D.L."/>
            <person name="Nelson D.R."/>
            <person name="Nelson K.A."/>
            <person name="Nixon K."/>
            <person name="Nusskern D.R."/>
            <person name="Pacleb J.M."/>
            <person name="Palazzolo M."/>
            <person name="Pittman G.S."/>
            <person name="Pan S."/>
            <person name="Pollard J."/>
            <person name="Puri V."/>
            <person name="Reese M.G."/>
            <person name="Reinert K."/>
            <person name="Remington K."/>
            <person name="Saunders R.D.C."/>
            <person name="Scheeler F."/>
            <person name="Shen H."/>
            <person name="Shue B.C."/>
            <person name="Siden-Kiamos I."/>
            <person name="Simpson M."/>
            <person name="Skupski M.P."/>
            <person name="Smith T.J."/>
            <person name="Spier E."/>
            <person name="Spradling A.C."/>
            <person name="Stapleton M."/>
            <person name="Strong R."/>
            <person name="Sun E."/>
            <person name="Svirskas R."/>
            <person name="Tector C."/>
            <person name="Turner R."/>
            <person name="Venter E."/>
            <person name="Wang A.H."/>
            <person name="Wang X."/>
            <person name="Wang Z.-Y."/>
            <person name="Wassarman D.A."/>
            <person name="Weinstock G.M."/>
            <person name="Weissenbach J."/>
            <person name="Williams S.M."/>
            <person name="Woodage T."/>
            <person name="Worley K.C."/>
            <person name="Wu D."/>
            <person name="Yang S."/>
            <person name="Yao Q.A."/>
            <person name="Ye J."/>
            <person name="Yeh R.-F."/>
            <person name="Zaveri J.S."/>
            <person name="Zhan M."/>
            <person name="Zhang G."/>
            <person name="Zhao Q."/>
            <person name="Zheng L."/>
            <person name="Zheng X.H."/>
            <person name="Zhong F.N."/>
            <person name="Zhong W."/>
            <person name="Zhou X."/>
            <person name="Zhu S.C."/>
            <person name="Zhu X."/>
            <person name="Smith H.O."/>
            <person name="Gibbs R.A."/>
            <person name="Myers E.W."/>
            <person name="Rubin G.M."/>
            <person name="Venter J.C."/>
        </authorList>
    </citation>
    <scope>NUCLEOTIDE SEQUENCE [LARGE SCALE GENOMIC DNA]</scope>
    <source>
        <strain evidence="17">Berkeley</strain>
    </source>
</reference>
<reference evidence="17" key="2">
    <citation type="journal article" date="2002" name="Genome Biol.">
        <title>Annotation of the Drosophila melanogaster euchromatic genome: a systematic review.</title>
        <authorList>
            <person name="Misra S."/>
            <person name="Crosby M.A."/>
            <person name="Mungall C.J."/>
            <person name="Matthews B.B."/>
            <person name="Campbell K.S."/>
            <person name="Hradecky P."/>
            <person name="Huang Y."/>
            <person name="Kaminker J.S."/>
            <person name="Millburn G.H."/>
            <person name="Prochnik S.E."/>
            <person name="Smith C.D."/>
            <person name="Tupy J.L."/>
            <person name="Whitfield E.J."/>
            <person name="Bayraktaroglu L."/>
            <person name="Berman B.P."/>
            <person name="Bettencourt B.R."/>
            <person name="Celniker S.E."/>
            <person name="de Grey A.D.N.J."/>
            <person name="Drysdale R.A."/>
            <person name="Harris N.L."/>
            <person name="Richter J."/>
            <person name="Russo S."/>
            <person name="Schroeder A.J."/>
            <person name="Shu S.Q."/>
            <person name="Stapleton M."/>
            <person name="Yamada C."/>
            <person name="Ashburner M."/>
            <person name="Gelbart W.M."/>
            <person name="Rubin G.M."/>
            <person name="Lewis S.E."/>
        </authorList>
    </citation>
    <scope>GENOME REANNOTATION</scope>
    <source>
        <strain evidence="17">Berkeley</strain>
    </source>
</reference>
<reference evidence="15" key="3">
    <citation type="journal article" date="2002" name="Genome Biol.">
        <title>A Drosophila full-length cDNA resource.</title>
        <authorList>
            <person name="Stapleton M."/>
            <person name="Carlson J.W."/>
            <person name="Brokstein P."/>
            <person name="Yu C."/>
            <person name="Champe M."/>
            <person name="George R.A."/>
            <person name="Guarin H."/>
            <person name="Kronmiller B."/>
            <person name="Pacleb J.M."/>
            <person name="Park S."/>
            <person name="Wan K.H."/>
            <person name="Rubin G.M."/>
            <person name="Celniker S.E."/>
        </authorList>
    </citation>
    <scope>NUCLEOTIDE SEQUENCE [LARGE SCALE MRNA]</scope>
    <source>
        <strain evidence="15">Berkeley</strain>
        <tissue evidence="15">Embryo</tissue>
    </source>
</reference>
<reference evidence="12" key="4">
    <citation type="journal article" date="2011" name="Mol. Cell. Biol.">
        <title>A subset of Drosophila integrator proteins is essential for efficient U7 snRNA and spliceosomal snRNA 3'-end formation.</title>
        <authorList>
            <person name="Ezzeddine N."/>
            <person name="Chen J."/>
            <person name="Waltenspiel B."/>
            <person name="Burch B."/>
            <person name="Albrecht T."/>
            <person name="Zhuo M."/>
            <person name="Warren W.D."/>
            <person name="Marzluff W.F."/>
            <person name="Wagner E.J."/>
        </authorList>
    </citation>
    <scope>FUNCTION</scope>
</reference>
<reference evidence="12" key="5">
    <citation type="journal article" date="2012" name="RNA">
        <title>An RNAi screen identifies additional members of the Drosophila Integrator complex and a requirement for cyclin C/Cdk8 in snRNA 3'-end formation.</title>
        <authorList>
            <person name="Chen J."/>
            <person name="Ezzeddine N."/>
            <person name="Waltenspiel B."/>
            <person name="Albrecht T.R."/>
            <person name="Warren W.D."/>
            <person name="Marzluff W.F."/>
            <person name="Wagner E.J."/>
        </authorList>
    </citation>
    <scope>FUNCTION</scope>
    <scope>SUBUNIT</scope>
    <scope>INTERACTION WITH INTS12</scope>
</reference>
<reference key="6">
    <citation type="journal article" date="2023" name="Am. J. Hum. Genet.">
        <title>Bi-allelic variants in INTS11 are associated with a complex neurological disorder.</title>
        <authorList>
            <consortium name="Undiagnosed Diseases Network"/>
            <person name="Tepe B."/>
            <person name="Macke E.L."/>
            <person name="Niceta M."/>
            <person name="Weisz Hubshman M."/>
            <person name="Kanca O."/>
            <person name="Schultz-Rogers L."/>
            <person name="Zarate Y.A."/>
            <person name="Schaefer G.B."/>
            <person name="Granadillo De Luque J.L."/>
            <person name="Wegner D.J."/>
            <person name="Cogne B."/>
            <person name="Gilbert-Dussardier B."/>
            <person name="Le Guillou X."/>
            <person name="Wagner E.J."/>
            <person name="Pais L.S."/>
            <person name="Neil J.E."/>
            <person name="Mochida G.H."/>
            <person name="Walsh C.A."/>
            <person name="Magal N."/>
            <person name="Drasinover V."/>
            <person name="Shohat M."/>
            <person name="Schwab T."/>
            <person name="Schmitz C."/>
            <person name="Clark K."/>
            <person name="Fine A."/>
            <person name="Lanpher B."/>
            <person name="Gavrilova R."/>
            <person name="Blanc P."/>
            <person name="Burglen L."/>
            <person name="Afenjar A."/>
            <person name="Steel D."/>
            <person name="Kurian M.A."/>
            <person name="Prabhakar P."/>
            <person name="Goesswein S."/>
            <person name="Di Donato N."/>
            <person name="Bertini E.S."/>
            <person name="Wangler M.F."/>
            <person name="Yamamoto S."/>
            <person name="Tartaglia M."/>
            <person name="Klee E.W."/>
            <person name="Bellen H.J."/>
        </authorList>
    </citation>
    <scope>TISSUE SPECIFICITY</scope>
    <scope>DISRUPTION PHENOTYPE</scope>
    <scope>MUTAGENESIS OF ARG-17; GLY-55; LEU-138; LYS-396; HIS-414; VAL-517 AND ILE-553</scope>
</reference>
<reference key="7">
    <citation type="journal article" date="2019" name="Genes Dev.">
        <title>The Integrator complex cleaves nascent mRNAs to attenuate transcription.</title>
        <authorList>
            <person name="Tatomer D.C."/>
            <person name="Elrod N.D."/>
            <person name="Liang D."/>
            <person name="Xiao M.S."/>
            <person name="Jiang J.Z."/>
            <person name="Jonathan M."/>
            <person name="Huang K.L."/>
            <person name="Wagner E.J."/>
            <person name="Cherry S."/>
            <person name="Wilusz J.E."/>
        </authorList>
    </citation>
    <scope>FUNCTION</scope>
    <scope>CATALYTIC ACTIVITY</scope>
    <scope>IDENTIFICATION IN THE INTEGRATOR COMPLEX</scope>
    <scope>ACTIVE SITE</scope>
    <scope>MUTAGENESIS OF GLU-203</scope>
</reference>
<reference key="8">
    <citation type="journal article" date="2019" name="Mol. Cell">
        <title>The Integrator complex attenuates promoter-proximal transcription at protein-coding genes.</title>
        <authorList>
            <person name="Elrod N.D."/>
            <person name="Henriques T."/>
            <person name="Huang K.L."/>
            <person name="Tatomer D.C."/>
            <person name="Wilusz J.E."/>
            <person name="Wagner E.J."/>
            <person name="Adelman K."/>
        </authorList>
    </citation>
    <scope>FUNCTION</scope>
    <scope>CATALYTIC ACTIVITY</scope>
    <scope>IDENTIFICATION IN THE INTEGRATOR COMPLEX</scope>
    <scope>ACTIVE SITE</scope>
    <scope>MUTAGENESIS OF GLU-203</scope>
</reference>
<reference key="9">
    <citation type="journal article" date="2020" name="Mol. Cell">
        <title>Integrator recruits protein phosphatase 2A to prevent pause release and facilitate transcription termination.</title>
        <authorList>
            <person name="Huang K.L."/>
            <person name="Jee D."/>
            <person name="Stein C.B."/>
            <person name="Elrod N.D."/>
            <person name="Henriques T."/>
            <person name="Mascibroda L.G."/>
            <person name="Baillat D."/>
            <person name="Russell W.K."/>
            <person name="Adelman K."/>
            <person name="Wagner E.J."/>
        </authorList>
    </citation>
    <scope>FUNCTION</scope>
    <scope>IDENTIFICATION IN THE INTAC COMPLEX</scope>
</reference>
<reference key="10">
    <citation type="journal article" date="2023" name="Mol. Cell">
        <title>IntS6 and the Integrator phosphatase module tune the efficiency of select premature transcription termination events.</title>
        <authorList>
            <person name="Fujiwara R."/>
            <person name="Zhai S.N."/>
            <person name="Liang D."/>
            <person name="Shah A.P."/>
            <person name="Tracey M."/>
            <person name="Ma X.K."/>
            <person name="Fields C.J."/>
            <person name="Mendoza-Figueroa M.S."/>
            <person name="Meline M.C."/>
            <person name="Tatomer D.C."/>
            <person name="Yang L."/>
            <person name="Wilusz J.E."/>
        </authorList>
    </citation>
    <scope>IDENTIFICATION IN THE INTAC COMPLEX</scope>
</reference>
<reference evidence="18" key="11">
    <citation type="journal article" date="2022" name="Nat. Commun.">
        <title>Inositol hexakisphosphate is required for Integrator function.</title>
        <authorList>
            <person name="Lin M.H."/>
            <person name="Jensen M.K."/>
            <person name="Elrod N.D."/>
            <person name="Huang K.L."/>
            <person name="Welle K.A."/>
            <person name="Wagner E.J."/>
            <person name="Tong L."/>
        </authorList>
    </citation>
    <scope>STRUCTURE BY ELECTRON MICROSCOPY (2.74 ANGSTROMS) IN COMPLEX WITH INOSITOL HEXAKISPHOSPHATE; ZINC; INTS4 AND INTS9</scope>
    <scope>COFACTOR</scope>
    <scope>MUTAGENESIS OF LYS-462</scope>
</reference>
<reference evidence="19" key="12">
    <citation type="journal article" date="2024" name="Mol. Cell">
        <title>Cytoplasmic binding partners of the Integrator endonuclease INTS11 and its paralog CPSF73 are required for their nuclear function.</title>
        <authorList>
            <person name="Lin M.H."/>
            <person name="Jensen M.K."/>
            <person name="Elrod N.D."/>
            <person name="Chu H.F."/>
            <person name="Haseley M."/>
            <person name="Beam A.C."/>
            <person name="Huang K.L."/>
            <person name="Chiang W."/>
            <person name="Russell W.K."/>
            <person name="Williams K."/>
            <person name="Proschel C."/>
            <person name="Wagner E.J."/>
            <person name="Tong L."/>
        </authorList>
    </citation>
    <scope>STRUCTURE BY ELECTRON MICROSCOPY (3.54 ANGSTROMS) IN COMPLEX WITH ZINC AND BRAT1</scope>
    <scope>ACTIVITY REGULATION</scope>
    <scope>IDENTIFICATION IN THE INTEGRATOR COMPLEX</scope>
    <scope>INTERACTION WITH BRAT1</scope>
    <scope>SUBCELLULAR LOCATION</scope>
</reference>
<feature type="chain" id="PRO_0000437670" description="Integrator complex subunit 11">
    <location>
        <begin position="1"/>
        <end position="597"/>
    </location>
</feature>
<feature type="short sequence motif" description="HXHXDH motif">
    <location>
        <begin position="68"/>
        <end position="73"/>
    </location>
</feature>
<feature type="active site" evidence="13 14">
    <location>
        <position position="203"/>
    </location>
</feature>
<feature type="binding site" evidence="6 9 18 19">
    <location>
        <position position="68"/>
    </location>
    <ligand>
        <name>Zn(2+)</name>
        <dbReference type="ChEBI" id="CHEBI:29105"/>
        <label>1</label>
    </ligand>
</feature>
<feature type="binding site" evidence="6 9 18 19">
    <location>
        <position position="70"/>
    </location>
    <ligand>
        <name>Zn(2+)</name>
        <dbReference type="ChEBI" id="CHEBI:29105"/>
        <label>1</label>
    </ligand>
</feature>
<feature type="binding site" evidence="6 9 18 19">
    <location>
        <position position="72"/>
    </location>
    <ligand>
        <name>Zn(2+)</name>
        <dbReference type="ChEBI" id="CHEBI:29105"/>
        <label>2</label>
    </ligand>
</feature>
<feature type="binding site" evidence="6 9 18 19">
    <location>
        <position position="73"/>
    </location>
    <ligand>
        <name>Zn(2+)</name>
        <dbReference type="ChEBI" id="CHEBI:29105"/>
        <label>2</label>
    </ligand>
</feature>
<feature type="binding site" evidence="6 9 18 19">
    <location>
        <position position="157"/>
    </location>
    <ligand>
        <name>Zn(2+)</name>
        <dbReference type="ChEBI" id="CHEBI:29105"/>
        <label>1</label>
    </ligand>
</feature>
<feature type="binding site" evidence="6 9 18 19">
    <location>
        <position position="178"/>
    </location>
    <ligand>
        <name>Zn(2+)</name>
        <dbReference type="ChEBI" id="CHEBI:29105"/>
        <label>1</label>
    </ligand>
</feature>
<feature type="binding site" evidence="6 9 18 19">
    <location>
        <position position="178"/>
    </location>
    <ligand>
        <name>Zn(2+)</name>
        <dbReference type="ChEBI" id="CHEBI:29105"/>
        <label>2</label>
    </ligand>
</feature>
<feature type="binding site" evidence="6 9 18 19">
    <location>
        <position position="414"/>
    </location>
    <ligand>
        <name>Zn(2+)</name>
        <dbReference type="ChEBI" id="CHEBI:29105"/>
        <label>2</label>
    </ligand>
</feature>
<feature type="binding site" evidence="6 18">
    <location>
        <position position="462"/>
    </location>
    <ligand>
        <name>1D-myo-inositol hexakisphosphate</name>
        <dbReference type="ChEBI" id="CHEBI:58130"/>
    </ligand>
</feature>
<feature type="mutagenesis site" description="Unable to rescue lethality in Ints11 knocked-out larvae." evidence="7">
    <original>R</original>
    <variation>L</variation>
    <location>
        <position position="17"/>
    </location>
</feature>
<feature type="mutagenesis site" description="Rescues lethality in Ints11 knocked-out larvae. Mutant adult flies have a shortened lifespan and locomotor defects." evidence="7">
    <original>G</original>
    <variation>S</variation>
    <location>
        <position position="55"/>
    </location>
</feature>
<feature type="mutagenesis site" description="Rescues lethality in Ints11 knocked-out larvae. Mutant adult flies have a shortened lifespan and locomotor defects." evidence="7">
    <original>L</original>
    <variation>F</variation>
    <location>
        <position position="138"/>
    </location>
</feature>
<feature type="mutagenesis site" description="Abolished RNA endonuclease activity." evidence="3 4">
    <original>E</original>
    <variation>Q</variation>
    <location>
        <position position="203"/>
    </location>
</feature>
<feature type="mutagenesis site" description="Rescues lethality in Ints11 knocked-out larvae. Mutant adult flies have a shortened lifespan and locomotor defects." evidence="7">
    <original>K</original>
    <variation>E</variation>
    <location>
        <position position="396"/>
    </location>
</feature>
<feature type="mutagenesis site" description="Unable to rescue lethality in Ints11-knocked-out flies." evidence="7">
    <original>H</original>
    <variation>Y</variation>
    <location>
        <position position="414"/>
    </location>
</feature>
<feature type="mutagenesis site" description="Abolished interaction with Inositol hexakisphosphate leading to impaired integrator complex function." evidence="6">
    <original>K</original>
    <variation>E</variation>
    <location>
        <position position="462"/>
    </location>
</feature>
<feature type="mutagenesis site" description="Rescues lethality in Ints11 knocked-out larvae. Mutant adult flies have a shortened lifespan and locomotor defects." evidence="7">
    <original>V</original>
    <variation>M</variation>
    <location>
        <position position="517"/>
    </location>
</feature>
<feature type="mutagenesis site" description="Rescues lethality in Ints11 knocked-out larvae. Mutant adult flies have a shortened lifespan and locomotor defects." evidence="7">
    <original>I</original>
    <variation>E</variation>
    <location>
        <position position="553"/>
    </location>
</feature>
<feature type="strand" evidence="20">
    <location>
        <begin position="3"/>
        <end position="10"/>
    </location>
</feature>
<feature type="strand" evidence="20">
    <location>
        <begin position="12"/>
        <end position="17"/>
    </location>
</feature>
<feature type="strand" evidence="20">
    <location>
        <begin position="19"/>
        <end position="24"/>
    </location>
</feature>
<feature type="strand" evidence="20">
    <location>
        <begin position="27"/>
        <end position="31"/>
    </location>
</feature>
<feature type="helix" evidence="20">
    <location>
        <begin position="42"/>
        <end position="44"/>
    </location>
</feature>
<feature type="turn" evidence="20">
    <location>
        <begin position="48"/>
        <end position="51"/>
    </location>
</feature>
<feature type="strand" evidence="20">
    <location>
        <begin position="53"/>
        <end position="55"/>
    </location>
</feature>
<feature type="turn" evidence="20">
    <location>
        <begin position="58"/>
        <end position="60"/>
    </location>
</feature>
<feature type="strand" evidence="20">
    <location>
        <begin position="62"/>
        <end position="65"/>
    </location>
</feature>
<feature type="helix" evidence="20">
    <location>
        <begin position="71"/>
        <end position="74"/>
    </location>
</feature>
<feature type="helix" evidence="20">
    <location>
        <begin position="77"/>
        <end position="82"/>
    </location>
</feature>
<feature type="turn" evidence="20">
    <location>
        <begin position="83"/>
        <end position="85"/>
    </location>
</feature>
<feature type="strand" evidence="20">
    <location>
        <begin position="90"/>
        <end position="93"/>
    </location>
</feature>
<feature type="helix" evidence="20">
    <location>
        <begin position="94"/>
        <end position="113"/>
    </location>
</feature>
<feature type="helix" evidence="20">
    <location>
        <begin position="123"/>
        <end position="129"/>
    </location>
</feature>
<feature type="strand" evidence="20">
    <location>
        <begin position="132"/>
        <end position="136"/>
    </location>
</feature>
<feature type="strand" evidence="20">
    <location>
        <begin position="145"/>
        <end position="147"/>
    </location>
</feature>
<feature type="strand" evidence="20">
    <location>
        <begin position="149"/>
        <end position="154"/>
    </location>
</feature>
<feature type="strand" evidence="20">
    <location>
        <begin position="162"/>
        <end position="168"/>
    </location>
</feature>
<feature type="strand" evidence="20">
    <location>
        <begin position="171"/>
        <end position="175"/>
    </location>
</feature>
<feature type="strand" evidence="20">
    <location>
        <begin position="185"/>
        <end position="187"/>
    </location>
</feature>
<feature type="strand" evidence="20">
    <location>
        <begin position="198"/>
        <end position="204"/>
    </location>
</feature>
<feature type="helix" evidence="20">
    <location>
        <begin position="214"/>
        <end position="229"/>
    </location>
</feature>
<feature type="turn" evidence="20">
    <location>
        <begin position="230"/>
        <end position="232"/>
    </location>
</feature>
<feature type="strand" evidence="20">
    <location>
        <begin position="235"/>
        <end position="238"/>
    </location>
</feature>
<feature type="strand" evidence="20">
    <location>
        <begin position="241"/>
        <end position="243"/>
    </location>
</feature>
<feature type="helix" evidence="20">
    <location>
        <begin position="245"/>
        <end position="258"/>
    </location>
</feature>
<feature type="strand" evidence="20">
    <location>
        <begin position="265"/>
        <end position="267"/>
    </location>
</feature>
<feature type="helix" evidence="20">
    <location>
        <begin position="275"/>
        <end position="281"/>
    </location>
</feature>
<feature type="helix" evidence="20">
    <location>
        <begin position="283"/>
        <end position="285"/>
    </location>
</feature>
<feature type="helix" evidence="20">
    <location>
        <begin position="288"/>
        <end position="293"/>
    </location>
</feature>
<feature type="turn" evidence="20">
    <location>
        <begin position="294"/>
        <end position="296"/>
    </location>
</feature>
<feature type="strand" evidence="20">
    <location>
        <begin position="303"/>
        <end position="307"/>
    </location>
</feature>
<feature type="helix" evidence="20">
    <location>
        <begin position="310"/>
        <end position="312"/>
    </location>
</feature>
<feature type="strand" evidence="20">
    <location>
        <begin position="320"/>
        <end position="325"/>
    </location>
</feature>
<feature type="helix" evidence="20">
    <location>
        <begin position="326"/>
        <end position="328"/>
    </location>
</feature>
<feature type="helix" evidence="20">
    <location>
        <begin position="332"/>
        <end position="340"/>
    </location>
</feature>
<feature type="strand" evidence="20">
    <location>
        <begin position="347"/>
        <end position="350"/>
    </location>
</feature>
<feature type="helix" evidence="20">
    <location>
        <begin position="359"/>
        <end position="364"/>
    </location>
</feature>
<feature type="strand" evidence="20">
    <location>
        <begin position="369"/>
        <end position="371"/>
    </location>
</feature>
<feature type="strand" evidence="20">
    <location>
        <begin position="377"/>
        <end position="379"/>
    </location>
</feature>
<feature type="strand" evidence="20">
    <location>
        <begin position="382"/>
        <end position="386"/>
    </location>
</feature>
<feature type="helix" evidence="20">
    <location>
        <begin position="395"/>
        <end position="405"/>
    </location>
</feature>
<feature type="strand" evidence="20">
    <location>
        <begin position="408"/>
        <end position="415"/>
    </location>
</feature>
<feature type="helix" evidence="20">
    <location>
        <begin position="417"/>
        <end position="431"/>
    </location>
</feature>
<feature type="strand" evidence="20">
    <location>
        <begin position="434"/>
        <end position="436"/>
    </location>
</feature>
<feature type="strand" evidence="20">
    <location>
        <begin position="444"/>
        <end position="447"/>
    </location>
</feature>
<feature type="strand" evidence="20">
    <location>
        <begin position="453"/>
        <end position="457"/>
    </location>
</feature>
<feature type="helix" evidence="20">
    <location>
        <begin position="458"/>
        <end position="468"/>
    </location>
</feature>
<feature type="strand" evidence="20">
    <location>
        <begin position="482"/>
        <end position="490"/>
    </location>
</feature>
<feature type="strand" evidence="20">
    <location>
        <begin position="492"/>
        <end position="495"/>
    </location>
</feature>
<feature type="helix" evidence="20">
    <location>
        <begin position="497"/>
        <end position="504"/>
    </location>
</feature>
<feature type="strand" evidence="20">
    <location>
        <begin position="511"/>
        <end position="520"/>
    </location>
</feature>
<feature type="helix" evidence="20">
    <location>
        <begin position="525"/>
        <end position="539"/>
    </location>
</feature>
<feature type="strand" evidence="20">
    <location>
        <begin position="546"/>
        <end position="548"/>
    </location>
</feature>
<feature type="turn" evidence="20">
    <location>
        <begin position="549"/>
        <end position="551"/>
    </location>
</feature>
<feature type="strand" evidence="20">
    <location>
        <begin position="552"/>
        <end position="555"/>
    </location>
</feature>
<feature type="strand" evidence="20">
    <location>
        <begin position="558"/>
        <end position="563"/>
    </location>
</feature>
<feature type="strand" evidence="20">
    <location>
        <begin position="571"/>
        <end position="579"/>
    </location>
</feature>
<feature type="helix" evidence="20">
    <location>
        <begin position="580"/>
        <end position="582"/>
    </location>
</feature>
<feature type="helix" evidence="20">
    <location>
        <begin position="583"/>
        <end position="594"/>
    </location>
</feature>
<protein>
    <recommendedName>
        <fullName evidence="10">Integrator complex subunit 11</fullName>
        <ecNumber evidence="3 4">3.1.27.-</ecNumber>
    </recommendedName>
</protein>
<proteinExistence type="evidence at protein level"/>